<feature type="chain" id="PRO_1000054940" description="Small ribosomal subunit protein uS17">
    <location>
        <begin position="1"/>
        <end position="84"/>
    </location>
</feature>
<name>RS17_CLOBL</name>
<keyword id="KW-0687">Ribonucleoprotein</keyword>
<keyword id="KW-0689">Ribosomal protein</keyword>
<keyword id="KW-0694">RNA-binding</keyword>
<keyword id="KW-0699">rRNA-binding</keyword>
<dbReference type="EMBL" id="CP000728">
    <property type="protein sequence ID" value="ABS39756.1"/>
    <property type="molecule type" value="Genomic_DNA"/>
</dbReference>
<dbReference type="RefSeq" id="WP_003357552.1">
    <property type="nucleotide sequence ID" value="NC_009699.1"/>
</dbReference>
<dbReference type="SMR" id="A7GJ65"/>
<dbReference type="GeneID" id="5186963"/>
<dbReference type="KEGG" id="cbf:CLI_3654"/>
<dbReference type="HOGENOM" id="CLU_073626_1_0_9"/>
<dbReference type="Proteomes" id="UP000002410">
    <property type="component" value="Chromosome"/>
</dbReference>
<dbReference type="GO" id="GO:0022627">
    <property type="term" value="C:cytosolic small ribosomal subunit"/>
    <property type="evidence" value="ECO:0007669"/>
    <property type="project" value="TreeGrafter"/>
</dbReference>
<dbReference type="GO" id="GO:0019843">
    <property type="term" value="F:rRNA binding"/>
    <property type="evidence" value="ECO:0007669"/>
    <property type="project" value="UniProtKB-UniRule"/>
</dbReference>
<dbReference type="GO" id="GO:0003735">
    <property type="term" value="F:structural constituent of ribosome"/>
    <property type="evidence" value="ECO:0007669"/>
    <property type="project" value="InterPro"/>
</dbReference>
<dbReference type="GO" id="GO:0006412">
    <property type="term" value="P:translation"/>
    <property type="evidence" value="ECO:0007669"/>
    <property type="project" value="UniProtKB-UniRule"/>
</dbReference>
<dbReference type="CDD" id="cd00364">
    <property type="entry name" value="Ribosomal_uS17"/>
    <property type="match status" value="1"/>
</dbReference>
<dbReference type="FunFam" id="2.40.50.140:FF:000026">
    <property type="entry name" value="30S ribosomal protein S17"/>
    <property type="match status" value="1"/>
</dbReference>
<dbReference type="Gene3D" id="2.40.50.140">
    <property type="entry name" value="Nucleic acid-binding proteins"/>
    <property type="match status" value="1"/>
</dbReference>
<dbReference type="HAMAP" id="MF_01345_B">
    <property type="entry name" value="Ribosomal_uS17_B"/>
    <property type="match status" value="1"/>
</dbReference>
<dbReference type="InterPro" id="IPR012340">
    <property type="entry name" value="NA-bd_OB-fold"/>
</dbReference>
<dbReference type="InterPro" id="IPR000266">
    <property type="entry name" value="Ribosomal_uS17"/>
</dbReference>
<dbReference type="InterPro" id="IPR019984">
    <property type="entry name" value="Ribosomal_uS17_bact/chlr"/>
</dbReference>
<dbReference type="NCBIfam" id="NF004123">
    <property type="entry name" value="PRK05610.1"/>
    <property type="match status" value="1"/>
</dbReference>
<dbReference type="NCBIfam" id="TIGR03635">
    <property type="entry name" value="uS17_bact"/>
    <property type="match status" value="1"/>
</dbReference>
<dbReference type="PANTHER" id="PTHR10744">
    <property type="entry name" value="40S RIBOSOMAL PROTEIN S11 FAMILY MEMBER"/>
    <property type="match status" value="1"/>
</dbReference>
<dbReference type="PANTHER" id="PTHR10744:SF1">
    <property type="entry name" value="SMALL RIBOSOMAL SUBUNIT PROTEIN US17M"/>
    <property type="match status" value="1"/>
</dbReference>
<dbReference type="Pfam" id="PF00366">
    <property type="entry name" value="Ribosomal_S17"/>
    <property type="match status" value="1"/>
</dbReference>
<dbReference type="PRINTS" id="PR00973">
    <property type="entry name" value="RIBOSOMALS17"/>
</dbReference>
<dbReference type="SUPFAM" id="SSF50249">
    <property type="entry name" value="Nucleic acid-binding proteins"/>
    <property type="match status" value="1"/>
</dbReference>
<proteinExistence type="inferred from homology"/>
<comment type="function">
    <text evidence="1">One of the primary rRNA binding proteins, it binds specifically to the 5'-end of 16S ribosomal RNA.</text>
</comment>
<comment type="subunit">
    <text evidence="1">Part of the 30S ribosomal subunit.</text>
</comment>
<comment type="similarity">
    <text evidence="1">Belongs to the universal ribosomal protein uS17 family.</text>
</comment>
<reference key="1">
    <citation type="submission" date="2007-06" db="EMBL/GenBank/DDBJ databases">
        <authorList>
            <person name="Brinkac L.M."/>
            <person name="Daugherty S."/>
            <person name="Dodson R.J."/>
            <person name="Madupu R."/>
            <person name="Brown J.L."/>
            <person name="Bruce D."/>
            <person name="Detter C."/>
            <person name="Munk C."/>
            <person name="Smith L.A."/>
            <person name="Smith T.J."/>
            <person name="White O."/>
            <person name="Brettin T.S."/>
        </authorList>
    </citation>
    <scope>NUCLEOTIDE SEQUENCE [LARGE SCALE GENOMIC DNA]</scope>
    <source>
        <strain>Langeland / NCTC 10281 / Type F</strain>
    </source>
</reference>
<evidence type="ECO:0000255" key="1">
    <source>
        <dbReference type="HAMAP-Rule" id="MF_01345"/>
    </source>
</evidence>
<evidence type="ECO:0000305" key="2"/>
<sequence length="84" mass="9846">MERSNRKTRIGRVVSNKMDKTIVVAVETKVRHPLYGKIMNRTTKFKAHDENNAANINDKVLIMETRPLSKQKRWRLVEVVEKAK</sequence>
<protein>
    <recommendedName>
        <fullName evidence="1">Small ribosomal subunit protein uS17</fullName>
    </recommendedName>
    <alternativeName>
        <fullName evidence="2">30S ribosomal protein S17</fullName>
    </alternativeName>
</protein>
<accession>A7GJ65</accession>
<organism>
    <name type="scientific">Clostridium botulinum (strain Langeland / NCTC 10281 / Type F)</name>
    <dbReference type="NCBI Taxonomy" id="441772"/>
    <lineage>
        <taxon>Bacteria</taxon>
        <taxon>Bacillati</taxon>
        <taxon>Bacillota</taxon>
        <taxon>Clostridia</taxon>
        <taxon>Eubacteriales</taxon>
        <taxon>Clostridiaceae</taxon>
        <taxon>Clostridium</taxon>
    </lineage>
</organism>
<gene>
    <name evidence="1" type="primary">rpsQ</name>
    <name type="ordered locus">CLI_3654</name>
</gene>